<protein>
    <recommendedName>
        <fullName evidence="1">Probable GTP-binding protein EngB</fullName>
    </recommendedName>
</protein>
<feature type="chain" id="PRO_1000115972" description="Probable GTP-binding protein EngB">
    <location>
        <begin position="1"/>
        <end position="201"/>
    </location>
</feature>
<feature type="domain" description="EngB-type G" evidence="1">
    <location>
        <begin position="22"/>
        <end position="195"/>
    </location>
</feature>
<feature type="binding site" evidence="1">
    <location>
        <begin position="30"/>
        <end position="37"/>
    </location>
    <ligand>
        <name>GTP</name>
        <dbReference type="ChEBI" id="CHEBI:37565"/>
    </ligand>
</feature>
<feature type="binding site" evidence="1">
    <location>
        <position position="37"/>
    </location>
    <ligand>
        <name>Mg(2+)</name>
        <dbReference type="ChEBI" id="CHEBI:18420"/>
    </ligand>
</feature>
<feature type="binding site" evidence="1">
    <location>
        <begin position="57"/>
        <end position="61"/>
    </location>
    <ligand>
        <name>GTP</name>
        <dbReference type="ChEBI" id="CHEBI:37565"/>
    </ligand>
</feature>
<feature type="binding site" evidence="1">
    <location>
        <position position="59"/>
    </location>
    <ligand>
        <name>Mg(2+)</name>
        <dbReference type="ChEBI" id="CHEBI:18420"/>
    </ligand>
</feature>
<feature type="binding site" evidence="1">
    <location>
        <begin position="75"/>
        <end position="78"/>
    </location>
    <ligand>
        <name>GTP</name>
        <dbReference type="ChEBI" id="CHEBI:37565"/>
    </ligand>
</feature>
<feature type="binding site" evidence="1">
    <location>
        <begin position="142"/>
        <end position="145"/>
    </location>
    <ligand>
        <name>GTP</name>
        <dbReference type="ChEBI" id="CHEBI:37565"/>
    </ligand>
</feature>
<feature type="binding site" evidence="1">
    <location>
        <begin position="174"/>
        <end position="176"/>
    </location>
    <ligand>
        <name>GTP</name>
        <dbReference type="ChEBI" id="CHEBI:37565"/>
    </ligand>
</feature>
<name>ENGB_FINM2</name>
<accession>B0S273</accession>
<gene>
    <name evidence="1" type="primary">engB</name>
    <name type="ordered locus">FMG_1045</name>
</gene>
<dbReference type="EMBL" id="AP008971">
    <property type="protein sequence ID" value="BAG08463.1"/>
    <property type="molecule type" value="Genomic_DNA"/>
</dbReference>
<dbReference type="SMR" id="B0S273"/>
<dbReference type="STRING" id="334413.FMG_1045"/>
<dbReference type="KEGG" id="fma:FMG_1045"/>
<dbReference type="eggNOG" id="COG0218">
    <property type="taxonomic scope" value="Bacteria"/>
</dbReference>
<dbReference type="HOGENOM" id="CLU_033732_3_0_9"/>
<dbReference type="Proteomes" id="UP000001319">
    <property type="component" value="Chromosome"/>
</dbReference>
<dbReference type="GO" id="GO:0005829">
    <property type="term" value="C:cytosol"/>
    <property type="evidence" value="ECO:0007669"/>
    <property type="project" value="TreeGrafter"/>
</dbReference>
<dbReference type="GO" id="GO:0005525">
    <property type="term" value="F:GTP binding"/>
    <property type="evidence" value="ECO:0007669"/>
    <property type="project" value="UniProtKB-UniRule"/>
</dbReference>
<dbReference type="GO" id="GO:0046872">
    <property type="term" value="F:metal ion binding"/>
    <property type="evidence" value="ECO:0007669"/>
    <property type="project" value="UniProtKB-KW"/>
</dbReference>
<dbReference type="GO" id="GO:0000917">
    <property type="term" value="P:division septum assembly"/>
    <property type="evidence" value="ECO:0007669"/>
    <property type="project" value="UniProtKB-KW"/>
</dbReference>
<dbReference type="CDD" id="cd01876">
    <property type="entry name" value="YihA_EngB"/>
    <property type="match status" value="1"/>
</dbReference>
<dbReference type="FunFam" id="3.40.50.300:FF:000098">
    <property type="entry name" value="Probable GTP-binding protein EngB"/>
    <property type="match status" value="1"/>
</dbReference>
<dbReference type="Gene3D" id="3.40.50.300">
    <property type="entry name" value="P-loop containing nucleotide triphosphate hydrolases"/>
    <property type="match status" value="1"/>
</dbReference>
<dbReference type="HAMAP" id="MF_00321">
    <property type="entry name" value="GTPase_EngB"/>
    <property type="match status" value="1"/>
</dbReference>
<dbReference type="InterPro" id="IPR030393">
    <property type="entry name" value="G_ENGB_dom"/>
</dbReference>
<dbReference type="InterPro" id="IPR006073">
    <property type="entry name" value="GTP-bd"/>
</dbReference>
<dbReference type="InterPro" id="IPR019987">
    <property type="entry name" value="GTP-bd_ribosome_bio_YsxC"/>
</dbReference>
<dbReference type="InterPro" id="IPR027417">
    <property type="entry name" value="P-loop_NTPase"/>
</dbReference>
<dbReference type="NCBIfam" id="TIGR03598">
    <property type="entry name" value="GTPase_YsxC"/>
    <property type="match status" value="1"/>
</dbReference>
<dbReference type="PANTHER" id="PTHR11649:SF13">
    <property type="entry name" value="ENGB-TYPE G DOMAIN-CONTAINING PROTEIN"/>
    <property type="match status" value="1"/>
</dbReference>
<dbReference type="PANTHER" id="PTHR11649">
    <property type="entry name" value="MSS1/TRME-RELATED GTP-BINDING PROTEIN"/>
    <property type="match status" value="1"/>
</dbReference>
<dbReference type="Pfam" id="PF01926">
    <property type="entry name" value="MMR_HSR1"/>
    <property type="match status" value="1"/>
</dbReference>
<dbReference type="SUPFAM" id="SSF52540">
    <property type="entry name" value="P-loop containing nucleoside triphosphate hydrolases"/>
    <property type="match status" value="1"/>
</dbReference>
<dbReference type="PROSITE" id="PS51706">
    <property type="entry name" value="G_ENGB"/>
    <property type="match status" value="1"/>
</dbReference>
<sequence length="201" mass="23214">MKIINSDLEKIAFLIEQYPDESLPEIAFCGRSNVGKSSFINSILDRKNLARTSSKPGKTRTVNFYNANNEFRLVDLPGYGYAQTSKSEKKKWAQVIETYLNNRRNLYEVFLIVDIRHKPTVQDKEMYNWIIQSGFCGFVIATKLDKIGKTMIKKNLNIIKKELNIDDDNLIYEYSSTSKTNKKAVMEQLEMILKYGSGIEE</sequence>
<keyword id="KW-0131">Cell cycle</keyword>
<keyword id="KW-0132">Cell division</keyword>
<keyword id="KW-0342">GTP-binding</keyword>
<keyword id="KW-0460">Magnesium</keyword>
<keyword id="KW-0479">Metal-binding</keyword>
<keyword id="KW-0547">Nucleotide-binding</keyword>
<keyword id="KW-1185">Reference proteome</keyword>
<keyword id="KW-0717">Septation</keyword>
<evidence type="ECO:0000255" key="1">
    <source>
        <dbReference type="HAMAP-Rule" id="MF_00321"/>
    </source>
</evidence>
<proteinExistence type="inferred from homology"/>
<reference key="1">
    <citation type="journal article" date="2008" name="DNA Res.">
        <title>Complete genome sequence of Finegoldia magna, an anaerobic opportunistic pathogen.</title>
        <authorList>
            <person name="Goto T."/>
            <person name="Yamashita A."/>
            <person name="Hirakawa H."/>
            <person name="Matsutani M."/>
            <person name="Todo K."/>
            <person name="Ohshima K."/>
            <person name="Toh H."/>
            <person name="Miyamoto K."/>
            <person name="Kuhara S."/>
            <person name="Hattori M."/>
            <person name="Shimizu T."/>
            <person name="Akimoto S."/>
        </authorList>
    </citation>
    <scope>NUCLEOTIDE SEQUENCE [LARGE SCALE GENOMIC DNA]</scope>
    <source>
        <strain>ATCC 29328 / DSM 20472 / WAL 2508</strain>
    </source>
</reference>
<comment type="function">
    <text evidence="1">Necessary for normal cell division and for the maintenance of normal septation.</text>
</comment>
<comment type="cofactor">
    <cofactor evidence="1">
        <name>Mg(2+)</name>
        <dbReference type="ChEBI" id="CHEBI:18420"/>
    </cofactor>
</comment>
<comment type="similarity">
    <text evidence="1">Belongs to the TRAFAC class TrmE-Era-EngA-EngB-Septin-like GTPase superfamily. EngB GTPase family.</text>
</comment>
<organism>
    <name type="scientific">Finegoldia magna (strain ATCC 29328 / DSM 20472 / WAL 2508)</name>
    <name type="common">Peptostreptococcus magnus</name>
    <dbReference type="NCBI Taxonomy" id="334413"/>
    <lineage>
        <taxon>Bacteria</taxon>
        <taxon>Bacillati</taxon>
        <taxon>Bacillota</taxon>
        <taxon>Tissierellia</taxon>
        <taxon>Tissierellales</taxon>
        <taxon>Peptoniphilaceae</taxon>
        <taxon>Finegoldia</taxon>
    </lineage>
</organism>